<dbReference type="EMBL" id="X59720">
    <property type="protein sequence ID" value="CAC42963.1"/>
    <property type="molecule type" value="Genomic_DNA"/>
</dbReference>
<dbReference type="EMBL" id="BK006937">
    <property type="protein sequence ID" value="DAA07467.1"/>
    <property type="molecule type" value="Genomic_DNA"/>
</dbReference>
<dbReference type="PIR" id="S19342">
    <property type="entry name" value="S19342"/>
</dbReference>
<dbReference type="RefSeq" id="NP_009913.2">
    <property type="nucleotide sequence ID" value="NM_001178663.1"/>
</dbReference>
<dbReference type="PDB" id="5MSM">
    <property type="method" value="X-ray"/>
    <property type="resolution" value="2.29 A"/>
    <property type="chains" value="A/D=1-380"/>
</dbReference>
<dbReference type="PDB" id="5MSN">
    <property type="method" value="X-ray"/>
    <property type="resolution" value="2.00 A"/>
    <property type="chains" value="A/B/C/D=90-380"/>
</dbReference>
<dbReference type="PDB" id="5OKC">
    <property type="method" value="X-ray"/>
    <property type="resolution" value="2.30 A"/>
    <property type="chains" value="A/B=1-380"/>
</dbReference>
<dbReference type="PDB" id="5OKI">
    <property type="method" value="X-ray"/>
    <property type="resolution" value="4.50 A"/>
    <property type="chains" value="C/G=1-380"/>
</dbReference>
<dbReference type="PDB" id="6S1C">
    <property type="method" value="X-ray"/>
    <property type="resolution" value="6.10 A"/>
    <property type="chains" value="B/F=1-380"/>
</dbReference>
<dbReference type="PDB" id="6S2E">
    <property type="method" value="EM"/>
    <property type="resolution" value="4.20 A"/>
    <property type="chains" value="B=1-380"/>
</dbReference>
<dbReference type="PDB" id="6S2F">
    <property type="method" value="EM"/>
    <property type="resolution" value="5.80 A"/>
    <property type="chains" value="B=1-380"/>
</dbReference>
<dbReference type="PDB" id="8TW9">
    <property type="method" value="EM"/>
    <property type="resolution" value="3.60 A"/>
    <property type="chains" value="B=1-380"/>
</dbReference>
<dbReference type="PDB" id="8TWA">
    <property type="method" value="EM"/>
    <property type="resolution" value="4.10 A"/>
    <property type="chains" value="B=1-380"/>
</dbReference>
<dbReference type="PDBsum" id="5MSM"/>
<dbReference type="PDBsum" id="5MSN"/>
<dbReference type="PDBsum" id="5OKC"/>
<dbReference type="PDBsum" id="5OKI"/>
<dbReference type="PDBsum" id="6S1C"/>
<dbReference type="PDBsum" id="6S2E"/>
<dbReference type="PDBsum" id="6S2F"/>
<dbReference type="PDBsum" id="8TW9"/>
<dbReference type="PDBsum" id="8TWA"/>
<dbReference type="EMDB" id="EMD-10088"/>
<dbReference type="EMDB" id="EMD-10089"/>
<dbReference type="EMDB" id="EMD-41663"/>
<dbReference type="EMDB" id="EMD-41664"/>
<dbReference type="SMR" id="P25559"/>
<dbReference type="BioGRID" id="30968">
    <property type="interactions" value="598"/>
</dbReference>
<dbReference type="ComplexPortal" id="CPX-1731">
    <property type="entry name" value="CTF18-RFC complex"/>
</dbReference>
<dbReference type="DIP" id="DIP-2088N"/>
<dbReference type="FunCoup" id="P25559">
    <property type="interactions" value="541"/>
</dbReference>
<dbReference type="IntAct" id="P25559">
    <property type="interactions" value="13"/>
</dbReference>
<dbReference type="MINT" id="P25559"/>
<dbReference type="STRING" id="4932.YCL016C"/>
<dbReference type="iPTMnet" id="P25559"/>
<dbReference type="PaxDb" id="4932-YCL016C"/>
<dbReference type="PeptideAtlas" id="P25559"/>
<dbReference type="EnsemblFungi" id="YCL016C_mRNA">
    <property type="protein sequence ID" value="YCL016C"/>
    <property type="gene ID" value="YCL016C"/>
</dbReference>
<dbReference type="GeneID" id="850344"/>
<dbReference type="KEGG" id="sce:YCL016C"/>
<dbReference type="AGR" id="SGD:S000000521"/>
<dbReference type="SGD" id="S000000521">
    <property type="gene designation" value="DCC1"/>
</dbReference>
<dbReference type="VEuPathDB" id="FungiDB:YCL016C"/>
<dbReference type="eggNOG" id="KOG0798">
    <property type="taxonomic scope" value="Eukaryota"/>
</dbReference>
<dbReference type="GeneTree" id="ENSGT00390000017400"/>
<dbReference type="HOGENOM" id="CLU_034504_0_0_1"/>
<dbReference type="InParanoid" id="P25559"/>
<dbReference type="OMA" id="DSESWPF"/>
<dbReference type="OrthoDB" id="276989at2759"/>
<dbReference type="BioCyc" id="YEAST:G3O-29282-MONOMER"/>
<dbReference type="BioGRID-ORCS" id="850344">
    <property type="hits" value="1 hit in 10 CRISPR screens"/>
</dbReference>
<dbReference type="PRO" id="PR:P25559"/>
<dbReference type="Proteomes" id="UP000002311">
    <property type="component" value="Chromosome III"/>
</dbReference>
<dbReference type="RNAct" id="P25559">
    <property type="molecule type" value="protein"/>
</dbReference>
<dbReference type="GO" id="GO:0000785">
    <property type="term" value="C:chromatin"/>
    <property type="evidence" value="ECO:0000318"/>
    <property type="project" value="GO_Central"/>
</dbReference>
<dbReference type="GO" id="GO:0000775">
    <property type="term" value="C:chromosome, centromeric region"/>
    <property type="evidence" value="ECO:0000318"/>
    <property type="project" value="GO_Central"/>
</dbReference>
<dbReference type="GO" id="GO:0031390">
    <property type="term" value="C:Ctf18 RFC-like complex"/>
    <property type="evidence" value="ECO:0000353"/>
    <property type="project" value="ComplexPortal"/>
</dbReference>
<dbReference type="GO" id="GO:0006260">
    <property type="term" value="P:DNA replication"/>
    <property type="evidence" value="ECO:0007669"/>
    <property type="project" value="UniProtKB-KW"/>
</dbReference>
<dbReference type="GO" id="GO:0035753">
    <property type="term" value="P:maintenance of DNA trinucleotide repeats"/>
    <property type="evidence" value="ECO:0000315"/>
    <property type="project" value="SGD"/>
</dbReference>
<dbReference type="GO" id="GO:0034088">
    <property type="term" value="P:maintenance of mitotic sister chromatid cohesion"/>
    <property type="evidence" value="ECO:0000318"/>
    <property type="project" value="GO_Central"/>
</dbReference>
<dbReference type="GO" id="GO:0007064">
    <property type="term" value="P:mitotic sister chromatid cohesion"/>
    <property type="evidence" value="ECO:0000315"/>
    <property type="project" value="SGD"/>
</dbReference>
<dbReference type="GO" id="GO:0034398">
    <property type="term" value="P:telomere tethering at nuclear periphery"/>
    <property type="evidence" value="ECO:0000315"/>
    <property type="project" value="SGD"/>
</dbReference>
<dbReference type="InterPro" id="IPR019128">
    <property type="entry name" value="Dcc1"/>
</dbReference>
<dbReference type="PANTHER" id="PTHR13395:SF6">
    <property type="entry name" value="SISTER CHROMATID COHESION PROTEIN DCC1"/>
    <property type="match status" value="1"/>
</dbReference>
<dbReference type="PANTHER" id="PTHR13395">
    <property type="entry name" value="SISTER CHROMATID COHESION PROTEIN DCC1-RELATED"/>
    <property type="match status" value="1"/>
</dbReference>
<dbReference type="Pfam" id="PF09724">
    <property type="entry name" value="Dcc1"/>
    <property type="match status" value="1"/>
</dbReference>
<protein>
    <recommendedName>
        <fullName>Sister chromatid cohesion protein DCC1</fullName>
    </recommendedName>
    <alternativeName>
        <fullName>Defective in sister chromatid cohesion protein 1</fullName>
    </alternativeName>
</protein>
<gene>
    <name type="primary">DCC1</name>
    <name type="ordered locus">YCL016C</name>
    <name type="ORF">YCL16C</name>
</gene>
<name>DCC1_YEAST</name>
<organism>
    <name type="scientific">Saccharomyces cerevisiae (strain ATCC 204508 / S288c)</name>
    <name type="common">Baker's yeast</name>
    <dbReference type="NCBI Taxonomy" id="559292"/>
    <lineage>
        <taxon>Eukaryota</taxon>
        <taxon>Fungi</taxon>
        <taxon>Dikarya</taxon>
        <taxon>Ascomycota</taxon>
        <taxon>Saccharomycotina</taxon>
        <taxon>Saccharomycetes</taxon>
        <taxon>Saccharomycetales</taxon>
        <taxon>Saccharomycetaceae</taxon>
        <taxon>Saccharomyces</taxon>
    </lineage>
</organism>
<feature type="chain" id="PRO_0000079802" description="Sister chromatid cohesion protein DCC1">
    <location>
        <begin position="1"/>
        <end position="380"/>
    </location>
</feature>
<feature type="strand" evidence="5">
    <location>
        <begin position="3"/>
        <end position="7"/>
    </location>
</feature>
<feature type="strand" evidence="5">
    <location>
        <begin position="15"/>
        <end position="19"/>
    </location>
</feature>
<feature type="helix" evidence="5">
    <location>
        <begin position="22"/>
        <end position="28"/>
    </location>
</feature>
<feature type="strand" evidence="5">
    <location>
        <begin position="38"/>
        <end position="40"/>
    </location>
</feature>
<feature type="strand" evidence="5">
    <location>
        <begin position="44"/>
        <end position="47"/>
    </location>
</feature>
<feature type="strand" evidence="5">
    <location>
        <begin position="50"/>
        <end position="52"/>
    </location>
</feature>
<feature type="strand" evidence="5">
    <location>
        <begin position="57"/>
        <end position="75"/>
    </location>
</feature>
<feature type="strand" evidence="5">
    <location>
        <begin position="96"/>
        <end position="103"/>
    </location>
</feature>
<feature type="strand" evidence="5">
    <location>
        <begin position="105"/>
        <end position="113"/>
    </location>
</feature>
<feature type="helix" evidence="6">
    <location>
        <begin position="131"/>
        <end position="134"/>
    </location>
</feature>
<feature type="helix" evidence="6">
    <location>
        <begin position="147"/>
        <end position="152"/>
    </location>
</feature>
<feature type="strand" evidence="6">
    <location>
        <begin position="154"/>
        <end position="156"/>
    </location>
</feature>
<feature type="helix" evidence="6">
    <location>
        <begin position="158"/>
        <end position="168"/>
    </location>
</feature>
<feature type="strand" evidence="6">
    <location>
        <begin position="170"/>
        <end position="173"/>
    </location>
</feature>
<feature type="strand" evidence="6">
    <location>
        <begin position="176"/>
        <end position="180"/>
    </location>
</feature>
<feature type="helix" evidence="6">
    <location>
        <begin position="182"/>
        <end position="198"/>
    </location>
</feature>
<feature type="helix" evidence="6">
    <location>
        <begin position="208"/>
        <end position="216"/>
    </location>
</feature>
<feature type="helix" evidence="5">
    <location>
        <begin position="221"/>
        <end position="223"/>
    </location>
</feature>
<feature type="helix" evidence="6">
    <location>
        <begin position="228"/>
        <end position="238"/>
    </location>
</feature>
<feature type="strand" evidence="6">
    <location>
        <begin position="239"/>
        <end position="241"/>
    </location>
</feature>
<feature type="strand" evidence="6">
    <location>
        <begin position="250"/>
        <end position="252"/>
    </location>
</feature>
<feature type="helix" evidence="6">
    <location>
        <begin position="254"/>
        <end position="269"/>
    </location>
</feature>
<feature type="strand" evidence="6">
    <location>
        <begin position="270"/>
        <end position="273"/>
    </location>
</feature>
<feature type="helix" evidence="6">
    <location>
        <begin position="277"/>
        <end position="285"/>
    </location>
</feature>
<feature type="helix" evidence="6">
    <location>
        <begin position="298"/>
        <end position="301"/>
    </location>
</feature>
<feature type="strand" evidence="6">
    <location>
        <begin position="304"/>
        <end position="306"/>
    </location>
</feature>
<feature type="strand" evidence="6">
    <location>
        <begin position="312"/>
        <end position="315"/>
    </location>
</feature>
<feature type="helix" evidence="6">
    <location>
        <begin position="318"/>
        <end position="320"/>
    </location>
</feature>
<feature type="helix" evidence="6">
    <location>
        <begin position="325"/>
        <end position="335"/>
    </location>
</feature>
<feature type="strand" evidence="6">
    <location>
        <begin position="337"/>
        <end position="340"/>
    </location>
</feature>
<feature type="helix" evidence="6">
    <location>
        <begin position="341"/>
        <end position="348"/>
    </location>
</feature>
<feature type="helix" evidence="6">
    <location>
        <begin position="349"/>
        <end position="351"/>
    </location>
</feature>
<feature type="helix" evidence="6">
    <location>
        <begin position="358"/>
        <end position="365"/>
    </location>
</feature>
<feature type="strand" evidence="6">
    <location>
        <begin position="366"/>
        <end position="370"/>
    </location>
</feature>
<feature type="strand" evidence="6">
    <location>
        <begin position="375"/>
        <end position="378"/>
    </location>
</feature>
<sequence length="380" mass="44074">MSINLHSAPEYDPSYKLIQLTPELLDIIQDPVQNHQLRFKSLDKDKSEVVLCSHDKTWVLKQRKHSNTVLLMREFVPEQPITFDETLLFGLSKPYMDVVGFAKTESEFETRETHGELNLNSVPIYNGELDFSDKIMKRSSTKVIGTLEELLENSPCSALEGISKWHKIGGSVKDGVLCILSQDFLFKALHVLLMSAMAESLDLQHLNVEDTHHAVGKDIEDEFNPYTREIIETVLNKFAVQEQEAENNTWRLRIPFIAQWYGIQALRKYVSGISMPIDEFLIKWKSLFPPFFPCDIDIDMLRGYHFKPTDKTVQYIAKSTLPMDPKERFKVLFRLQSQWDLEDIKPLIEELNSRGMKIDSFIMKYARRKRLGKKTVVTSR</sequence>
<proteinExistence type="evidence at protein level"/>
<keyword id="KW-0002">3D-structure</keyword>
<keyword id="KW-0235">DNA replication</keyword>
<keyword id="KW-1185">Reference proteome</keyword>
<evidence type="ECO:0000269" key="1">
    <source>
    </source>
</evidence>
<evidence type="ECO:0000269" key="2">
    <source>
    </source>
</evidence>
<evidence type="ECO:0000269" key="3">
    <source>
    </source>
</evidence>
<evidence type="ECO:0000305" key="4"/>
<evidence type="ECO:0007829" key="5">
    <source>
        <dbReference type="PDB" id="5MSM"/>
    </source>
</evidence>
<evidence type="ECO:0007829" key="6">
    <source>
        <dbReference type="PDB" id="5MSN"/>
    </source>
</evidence>
<comment type="function">
    <text evidence="1 3">Component of the RFC-like complex CTF18-RFC which is required for efficient establishment of chromosome cohesion during S-phase and may load or unload POL30/PCNA. During a clamp loading circle, the RFC:clamp complex binds to DNA and the recognition of the double-stranded/single-stranded junction stimulates ATP hydrolysis by RFC. The complex presumably provides bipartite ATP sites in which one subunit supplies a catalytic site for hydrolysis of ATP bound to the neighboring subunit. Dissociation of RFC from the clamp leaves the clamp encircling DNA.</text>
</comment>
<comment type="subunit">
    <text evidence="1 3">Component of the CTF18-RFC complex, which consists of CTF18, CTF8, DCC1, RFC2, RFC3, RFC4 and RFC5.</text>
</comment>
<comment type="interaction">
    <interactant intactId="EBI-5661">
        <id>P25559</id>
    </interactant>
    <interactant intactId="EBI-5216">
        <id>P38877</id>
        <label>CTF8</label>
    </interactant>
    <organismsDiffer>false</organismsDiffer>
    <experiments>3</experiments>
</comment>
<comment type="miscellaneous">
    <text evidence="2">Present with 1660 molecules/cell in log phase SD medium.</text>
</comment>
<comment type="similarity">
    <text evidence="4">Belongs to the DCC1 family.</text>
</comment>
<accession>P25559</accession>
<accession>D6VQZ8</accession>
<accession>Q8NIM7</accession>
<reference key="1">
    <citation type="journal article" date="1992" name="Nature">
        <title>The complete DNA sequence of yeast chromosome III.</title>
        <authorList>
            <person name="Oliver S.G."/>
            <person name="van der Aart Q.J.M."/>
            <person name="Agostoni-Carbone M.L."/>
            <person name="Aigle M."/>
            <person name="Alberghina L."/>
            <person name="Alexandraki D."/>
            <person name="Antoine G."/>
            <person name="Anwar R."/>
            <person name="Ballesta J.P.G."/>
            <person name="Benit P."/>
            <person name="Berben G."/>
            <person name="Bergantino E."/>
            <person name="Biteau N."/>
            <person name="Bolle P.-A."/>
            <person name="Bolotin-Fukuhara M."/>
            <person name="Brown A."/>
            <person name="Brown A.J.P."/>
            <person name="Buhler J.-M."/>
            <person name="Carcano C."/>
            <person name="Carignani G."/>
            <person name="Cederberg H."/>
            <person name="Chanet R."/>
            <person name="Contreras R."/>
            <person name="Crouzet M."/>
            <person name="Daignan-Fornier B."/>
            <person name="Defoor E."/>
            <person name="Delgado M.D."/>
            <person name="Demolder J."/>
            <person name="Doira C."/>
            <person name="Dubois E."/>
            <person name="Dujon B."/>
            <person name="Duesterhoeft A."/>
            <person name="Erdmann D."/>
            <person name="Esteban M."/>
            <person name="Fabre F."/>
            <person name="Fairhead C."/>
            <person name="Faye G."/>
            <person name="Feldmann H."/>
            <person name="Fiers W."/>
            <person name="Francingues-Gaillard M.-C."/>
            <person name="Franco L."/>
            <person name="Frontali L."/>
            <person name="Fukuhara H."/>
            <person name="Fuller L.J."/>
            <person name="Galland P."/>
            <person name="Gent M.E."/>
            <person name="Gigot D."/>
            <person name="Gilliquet V."/>
            <person name="Glansdorff N."/>
            <person name="Goffeau A."/>
            <person name="Grenson M."/>
            <person name="Grisanti P."/>
            <person name="Grivell L.A."/>
            <person name="de Haan M."/>
            <person name="Haasemann M."/>
            <person name="Hatat D."/>
            <person name="Hoenicka J."/>
            <person name="Hegemann J.H."/>
            <person name="Herbert C.J."/>
            <person name="Hilger F."/>
            <person name="Hohmann S."/>
            <person name="Hollenberg C.P."/>
            <person name="Huse K."/>
            <person name="Iborra F."/>
            <person name="Indge K.J."/>
            <person name="Isono K."/>
            <person name="Jacq C."/>
            <person name="Jacquet M."/>
            <person name="James C.M."/>
            <person name="Jauniaux J.-C."/>
            <person name="Jia Y."/>
            <person name="Jimenez A."/>
            <person name="Kelly A."/>
            <person name="Kleinhans U."/>
            <person name="Kreisl P."/>
            <person name="Lanfranchi G."/>
            <person name="Lewis C."/>
            <person name="van der Linden C.G."/>
            <person name="Lucchini G."/>
            <person name="Lutzenkirchen K."/>
            <person name="Maat M.J."/>
            <person name="Mallet L."/>
            <person name="Mannhaupt G."/>
            <person name="Martegani E."/>
            <person name="Mathieu A."/>
            <person name="Maurer C.T.C."/>
            <person name="McConnell D."/>
            <person name="McKee R.A."/>
            <person name="Messenguy F."/>
            <person name="Mewes H.-W."/>
            <person name="Molemans F."/>
            <person name="Montague M.A."/>
            <person name="Muzi Falconi M."/>
            <person name="Navas L."/>
            <person name="Newlon C.S."/>
            <person name="Noone D."/>
            <person name="Pallier C."/>
            <person name="Panzeri L."/>
            <person name="Pearson B.M."/>
            <person name="Perea J."/>
            <person name="Philippsen P."/>
            <person name="Pierard A."/>
            <person name="Planta R.J."/>
            <person name="Plevani P."/>
            <person name="Poetsch B."/>
            <person name="Pohl F.M."/>
            <person name="Purnelle B."/>
            <person name="Ramezani Rad M."/>
            <person name="Rasmussen S.W."/>
            <person name="Raynal A."/>
            <person name="Remacha M.A."/>
            <person name="Richterich P."/>
            <person name="Roberts A.B."/>
            <person name="Rodriguez F."/>
            <person name="Sanz E."/>
            <person name="Schaaff-Gerstenschlaeger I."/>
            <person name="Scherens B."/>
            <person name="Schweitzer B."/>
            <person name="Shu Y."/>
            <person name="Skala J."/>
            <person name="Slonimski P.P."/>
            <person name="Sor F."/>
            <person name="Soustelle C."/>
            <person name="Spiegelberg R."/>
            <person name="Stateva L.I."/>
            <person name="Steensma H.Y."/>
            <person name="Steiner S."/>
            <person name="Thierry A."/>
            <person name="Thireos G."/>
            <person name="Tzermia M."/>
            <person name="Urrestarazu L.A."/>
            <person name="Valle G."/>
            <person name="Vetter I."/>
            <person name="van Vliet-Reedijk J.C."/>
            <person name="Voet M."/>
            <person name="Volckaert G."/>
            <person name="Vreken P."/>
            <person name="Wang H."/>
            <person name="Warmington J.R."/>
            <person name="von Wettstein D."/>
            <person name="Wicksteed B.L."/>
            <person name="Wilson C."/>
            <person name="Wurst H."/>
            <person name="Xu G."/>
            <person name="Yoshikawa A."/>
            <person name="Zimmermann F.K."/>
            <person name="Sgouros J.G."/>
        </authorList>
    </citation>
    <scope>NUCLEOTIDE SEQUENCE [LARGE SCALE GENOMIC DNA]</scope>
    <source>
        <strain>ATCC 204508 / S288c</strain>
    </source>
</reference>
<reference key="2">
    <citation type="submission" date="2001-06" db="EMBL/GenBank/DDBJ databases">
        <authorList>
            <person name="Valles G."/>
            <person name="Volckaerts G."/>
        </authorList>
    </citation>
    <scope>SEQUENCE REVISION</scope>
</reference>
<reference key="3">
    <citation type="journal article" date="2014" name="G3 (Bethesda)">
        <title>The reference genome sequence of Saccharomyces cerevisiae: Then and now.</title>
        <authorList>
            <person name="Engel S.R."/>
            <person name="Dietrich F.S."/>
            <person name="Fisk D.G."/>
            <person name="Binkley G."/>
            <person name="Balakrishnan R."/>
            <person name="Costanzo M.C."/>
            <person name="Dwight S.S."/>
            <person name="Hitz B.C."/>
            <person name="Karra K."/>
            <person name="Nash R.S."/>
            <person name="Weng S."/>
            <person name="Wong E.D."/>
            <person name="Lloyd P."/>
            <person name="Skrzypek M.S."/>
            <person name="Miyasato S.R."/>
            <person name="Simison M."/>
            <person name="Cherry J.M."/>
        </authorList>
    </citation>
    <scope>GENOME REANNOTATION</scope>
    <source>
        <strain>ATCC 204508 / S288c</strain>
    </source>
</reference>
<reference key="4">
    <citation type="journal article" date="2001" name="Mol. Cell">
        <title>Identification of RFC(Ctf18p, Ctf8p, Dcc1p): an alternative RFC complex required for sister chromatid cohesion in S. cerevisiae.</title>
        <authorList>
            <person name="Mayer M.L."/>
            <person name="Gygi S.P."/>
            <person name="Aebersold R."/>
            <person name="Hieter P."/>
        </authorList>
    </citation>
    <scope>FUNCTION</scope>
    <scope>IDENTIFICATION IN THE CTF18-RFC COMPLEX</scope>
</reference>
<reference key="5">
    <citation type="journal article" date="2003" name="Nature">
        <title>Global analysis of protein expression in yeast.</title>
        <authorList>
            <person name="Ghaemmaghami S."/>
            <person name="Huh W.-K."/>
            <person name="Bower K."/>
            <person name="Howson R.W."/>
            <person name="Belle A."/>
            <person name="Dephoure N."/>
            <person name="O'Shea E.K."/>
            <person name="Weissman J.S."/>
        </authorList>
    </citation>
    <scope>LEVEL OF PROTEIN EXPRESSION [LARGE SCALE ANALYSIS]</scope>
</reference>
<reference key="6">
    <citation type="journal article" date="2005" name="Mol. Cell. Biol.">
        <title>Replication protein A-directed unloading of PCNA by the Ctf18 cohesion establishment complex.</title>
        <authorList>
            <person name="Bylund G.O."/>
            <person name="Burgers P.M."/>
        </authorList>
    </citation>
    <scope>IDENTIFICATION IN THE CTF18-RFC COMPLEX</scope>
    <scope>FUNCTION OF THE CTF18-RFC COMPLEX</scope>
</reference>